<sequence length="43" mass="4722">METATLVAIFISGLLVSFTGYALYTAFGQPSQQLRDPFEEHGD</sequence>
<comment type="function">
    <text evidence="1">May play a role in photosystem I and II biogenesis.</text>
</comment>
<comment type="subcellular location">
    <subcellularLocation>
        <location evidence="1">Plastid</location>
        <location evidence="1">Chloroplast thylakoid membrane</location>
        <topology evidence="1">Single-pass membrane protein</topology>
    </subcellularLocation>
</comment>
<comment type="similarity">
    <text evidence="1">Belongs to the PsbN family.</text>
</comment>
<comment type="caution">
    <text evidence="1">Originally thought to be a component of PSII; based on experiments in Synechocystis, N.tabacum and barley, and its absence from PSII in T.elongatus and T.vulcanus, this is probably not true.</text>
</comment>
<organism>
    <name type="scientific">Hydrastis canadensis</name>
    <name type="common">Goldenseal</name>
    <dbReference type="NCBI Taxonomy" id="13569"/>
    <lineage>
        <taxon>Eukaryota</taxon>
        <taxon>Viridiplantae</taxon>
        <taxon>Streptophyta</taxon>
        <taxon>Embryophyta</taxon>
        <taxon>Tracheophyta</taxon>
        <taxon>Spermatophyta</taxon>
        <taxon>Magnoliopsida</taxon>
        <taxon>Ranunculales</taxon>
        <taxon>Ranunculaceae</taxon>
        <taxon>Hydrastidoideae</taxon>
        <taxon>Hydrastis</taxon>
    </lineage>
</organism>
<dbReference type="EMBL" id="AY007464">
    <property type="protein sequence ID" value="AAG12369.1"/>
    <property type="molecule type" value="Genomic_DNA"/>
</dbReference>
<dbReference type="RefSeq" id="YP_009366868.1">
    <property type="nucleotide sequence ID" value="NC_034702.1"/>
</dbReference>
<dbReference type="SMR" id="Q7HIW4"/>
<dbReference type="GeneID" id="32883765"/>
<dbReference type="GO" id="GO:0009535">
    <property type="term" value="C:chloroplast thylakoid membrane"/>
    <property type="evidence" value="ECO:0007669"/>
    <property type="project" value="UniProtKB-SubCell"/>
</dbReference>
<dbReference type="GO" id="GO:0015979">
    <property type="term" value="P:photosynthesis"/>
    <property type="evidence" value="ECO:0007669"/>
    <property type="project" value="InterPro"/>
</dbReference>
<dbReference type="HAMAP" id="MF_00293">
    <property type="entry name" value="PSII_PsbN"/>
    <property type="match status" value="1"/>
</dbReference>
<dbReference type="InterPro" id="IPR003398">
    <property type="entry name" value="PSII_PsbN"/>
</dbReference>
<dbReference type="PANTHER" id="PTHR35326">
    <property type="entry name" value="PROTEIN PSBN"/>
    <property type="match status" value="1"/>
</dbReference>
<dbReference type="PANTHER" id="PTHR35326:SF3">
    <property type="entry name" value="PROTEIN PSBN"/>
    <property type="match status" value="1"/>
</dbReference>
<dbReference type="Pfam" id="PF02468">
    <property type="entry name" value="PsbN"/>
    <property type="match status" value="1"/>
</dbReference>
<gene>
    <name evidence="1" type="primary">psbN</name>
</gene>
<protein>
    <recommendedName>
        <fullName evidence="1">Protein PsbN</fullName>
    </recommendedName>
</protein>
<geneLocation type="chloroplast"/>
<name>PSBN_HYDCA</name>
<accession>Q7HIW4</accession>
<reference key="1">
    <citation type="journal article" date="2003" name="Mol. Phylogenet. Evol.">
        <title>Inference of higher-order relationships in the cycads from a large chloroplast data set.</title>
        <authorList>
            <person name="Rai H.S."/>
            <person name="O'Brien H.E."/>
            <person name="Reeves P.A."/>
            <person name="Olmstead R.G."/>
            <person name="Graham S.W."/>
        </authorList>
    </citation>
    <scope>NUCLEOTIDE SEQUENCE [GENOMIC DNA]</scope>
</reference>
<keyword id="KW-0150">Chloroplast</keyword>
<keyword id="KW-0472">Membrane</keyword>
<keyword id="KW-0934">Plastid</keyword>
<keyword id="KW-0793">Thylakoid</keyword>
<keyword id="KW-0812">Transmembrane</keyword>
<keyword id="KW-1133">Transmembrane helix</keyword>
<proteinExistence type="inferred from homology"/>
<feature type="chain" id="PRO_0000207908" description="Protein PsbN">
    <location>
        <begin position="1"/>
        <end position="43"/>
    </location>
</feature>
<feature type="transmembrane region" description="Helical" evidence="1">
    <location>
        <begin position="7"/>
        <end position="27"/>
    </location>
</feature>
<evidence type="ECO:0000255" key="1">
    <source>
        <dbReference type="HAMAP-Rule" id="MF_00293"/>
    </source>
</evidence>